<gene>
    <name evidence="1" type="primary">thiG</name>
    <name type="ordered locus">BURPS1710b_3707</name>
</gene>
<dbReference type="EC" id="2.8.1.10" evidence="1"/>
<dbReference type="EMBL" id="CP000124">
    <property type="protein sequence ID" value="ABA49317.1"/>
    <property type="molecule type" value="Genomic_DNA"/>
</dbReference>
<dbReference type="RefSeq" id="WP_004199935.1">
    <property type="nucleotide sequence ID" value="NC_007434.1"/>
</dbReference>
<dbReference type="SMR" id="Q3JMY2"/>
<dbReference type="EnsemblBacteria" id="ABA49317">
    <property type="protein sequence ID" value="ABA49317"/>
    <property type="gene ID" value="BURPS1710b_3707"/>
</dbReference>
<dbReference type="KEGG" id="bpm:BURPS1710b_3707"/>
<dbReference type="HOGENOM" id="CLU_062233_1_0_4"/>
<dbReference type="UniPathway" id="UPA00060"/>
<dbReference type="Proteomes" id="UP000002700">
    <property type="component" value="Chromosome I"/>
</dbReference>
<dbReference type="GO" id="GO:0005737">
    <property type="term" value="C:cytoplasm"/>
    <property type="evidence" value="ECO:0007669"/>
    <property type="project" value="UniProtKB-SubCell"/>
</dbReference>
<dbReference type="GO" id="GO:1990107">
    <property type="term" value="F:thiazole synthase activity"/>
    <property type="evidence" value="ECO:0007669"/>
    <property type="project" value="UniProtKB-EC"/>
</dbReference>
<dbReference type="GO" id="GO:0009229">
    <property type="term" value="P:thiamine diphosphate biosynthetic process"/>
    <property type="evidence" value="ECO:0007669"/>
    <property type="project" value="UniProtKB-UniRule"/>
</dbReference>
<dbReference type="CDD" id="cd04728">
    <property type="entry name" value="ThiG"/>
    <property type="match status" value="1"/>
</dbReference>
<dbReference type="Gene3D" id="3.20.20.70">
    <property type="entry name" value="Aldolase class I"/>
    <property type="match status" value="1"/>
</dbReference>
<dbReference type="HAMAP" id="MF_00443">
    <property type="entry name" value="ThiG"/>
    <property type="match status" value="1"/>
</dbReference>
<dbReference type="InterPro" id="IPR013785">
    <property type="entry name" value="Aldolase_TIM"/>
</dbReference>
<dbReference type="InterPro" id="IPR033983">
    <property type="entry name" value="Thiazole_synthase_ThiG"/>
</dbReference>
<dbReference type="InterPro" id="IPR008867">
    <property type="entry name" value="ThiG"/>
</dbReference>
<dbReference type="PANTHER" id="PTHR34266">
    <property type="entry name" value="THIAZOLE SYNTHASE"/>
    <property type="match status" value="1"/>
</dbReference>
<dbReference type="PANTHER" id="PTHR34266:SF2">
    <property type="entry name" value="THIAZOLE SYNTHASE"/>
    <property type="match status" value="1"/>
</dbReference>
<dbReference type="Pfam" id="PF05690">
    <property type="entry name" value="ThiG"/>
    <property type="match status" value="1"/>
</dbReference>
<dbReference type="SUPFAM" id="SSF110399">
    <property type="entry name" value="ThiG-like"/>
    <property type="match status" value="1"/>
</dbReference>
<comment type="function">
    <text evidence="1">Catalyzes the rearrangement of 1-deoxy-D-xylulose 5-phosphate (DXP) to produce the thiazole phosphate moiety of thiamine. Sulfur is provided by the thiocarboxylate moiety of the carrier protein ThiS. In vitro, sulfur can be provided by H(2)S.</text>
</comment>
<comment type="catalytic activity">
    <reaction evidence="1">
        <text>[ThiS sulfur-carrier protein]-C-terminal-Gly-aminoethanethioate + 2-iminoacetate + 1-deoxy-D-xylulose 5-phosphate = [ThiS sulfur-carrier protein]-C-terminal Gly-Gly + 2-[(2R,5Z)-2-carboxy-4-methylthiazol-5(2H)-ylidene]ethyl phosphate + 2 H2O + H(+)</text>
        <dbReference type="Rhea" id="RHEA:26297"/>
        <dbReference type="Rhea" id="RHEA-COMP:12909"/>
        <dbReference type="Rhea" id="RHEA-COMP:19908"/>
        <dbReference type="ChEBI" id="CHEBI:15377"/>
        <dbReference type="ChEBI" id="CHEBI:15378"/>
        <dbReference type="ChEBI" id="CHEBI:57792"/>
        <dbReference type="ChEBI" id="CHEBI:62899"/>
        <dbReference type="ChEBI" id="CHEBI:77846"/>
        <dbReference type="ChEBI" id="CHEBI:90778"/>
        <dbReference type="ChEBI" id="CHEBI:232372"/>
        <dbReference type="EC" id="2.8.1.10"/>
    </reaction>
</comment>
<comment type="pathway">
    <text evidence="1">Cofactor biosynthesis; thiamine diphosphate biosynthesis.</text>
</comment>
<comment type="subunit">
    <text evidence="1">Homotetramer. Forms heterodimers with either ThiH or ThiS.</text>
</comment>
<comment type="subcellular location">
    <subcellularLocation>
        <location evidence="1">Cytoplasm</location>
    </subcellularLocation>
</comment>
<comment type="similarity">
    <text evidence="1">Belongs to the ThiG family.</text>
</comment>
<feature type="chain" id="PRO_0000236334" description="Thiazole synthase">
    <location>
        <begin position="1"/>
        <end position="271"/>
    </location>
</feature>
<feature type="active site" description="Schiff-base intermediate with DXP" evidence="1">
    <location>
        <position position="104"/>
    </location>
</feature>
<feature type="binding site" evidence="1">
    <location>
        <position position="165"/>
    </location>
    <ligand>
        <name>1-deoxy-D-xylulose 5-phosphate</name>
        <dbReference type="ChEBI" id="CHEBI:57792"/>
    </ligand>
</feature>
<feature type="binding site" evidence="1">
    <location>
        <begin position="192"/>
        <end position="193"/>
    </location>
    <ligand>
        <name>1-deoxy-D-xylulose 5-phosphate</name>
        <dbReference type="ChEBI" id="CHEBI:57792"/>
    </ligand>
</feature>
<feature type="binding site" evidence="1">
    <location>
        <begin position="214"/>
        <end position="215"/>
    </location>
    <ligand>
        <name>1-deoxy-D-xylulose 5-phosphate</name>
        <dbReference type="ChEBI" id="CHEBI:57792"/>
    </ligand>
</feature>
<reference key="1">
    <citation type="journal article" date="2010" name="Genome Biol. Evol.">
        <title>Continuing evolution of Burkholderia mallei through genome reduction and large-scale rearrangements.</title>
        <authorList>
            <person name="Losada L."/>
            <person name="Ronning C.M."/>
            <person name="DeShazer D."/>
            <person name="Woods D."/>
            <person name="Fedorova N."/>
            <person name="Kim H.S."/>
            <person name="Shabalina S.A."/>
            <person name="Pearson T.R."/>
            <person name="Brinkac L."/>
            <person name="Tan P."/>
            <person name="Nandi T."/>
            <person name="Crabtree J."/>
            <person name="Badger J."/>
            <person name="Beckstrom-Sternberg S."/>
            <person name="Saqib M."/>
            <person name="Schutzer S.E."/>
            <person name="Keim P."/>
            <person name="Nierman W.C."/>
        </authorList>
    </citation>
    <scope>NUCLEOTIDE SEQUENCE [LARGE SCALE GENOMIC DNA]</scope>
    <source>
        <strain>1710b</strain>
    </source>
</reference>
<evidence type="ECO:0000255" key="1">
    <source>
        <dbReference type="HAMAP-Rule" id="MF_00443"/>
    </source>
</evidence>
<name>THIG_BURP1</name>
<proteinExistence type="inferred from homology"/>
<protein>
    <recommendedName>
        <fullName evidence="1">Thiazole synthase</fullName>
        <ecNumber evidence="1">2.8.1.10</ecNumber>
    </recommendedName>
</protein>
<sequence>MTPLSSADTLTLHGQTFASRVLLGTSRYPSLQSLSDSIAAARPGMVTVALRRQMNAGAAEAGFFELLKRHDVPLLPNTAGCQTIAEAVTTAQMAREVFETDWIKLELIGDDYTLQPDPVGLIEAATLLVKDGFKVLPYCTEDLVIARRLLDAGCEALMPWGAPIGTGKGIVNPYGLRVLRERLPDVPLIVDAGLGVPSHACQVMEWGFDGVLLNTAVSQATHPEIMARAFARGVEAGRAAYLAGPMDARESAHASTPVVGMPFWHQDGSHA</sequence>
<accession>Q3JMY2</accession>
<organism>
    <name type="scientific">Burkholderia pseudomallei (strain 1710b)</name>
    <dbReference type="NCBI Taxonomy" id="320372"/>
    <lineage>
        <taxon>Bacteria</taxon>
        <taxon>Pseudomonadati</taxon>
        <taxon>Pseudomonadota</taxon>
        <taxon>Betaproteobacteria</taxon>
        <taxon>Burkholderiales</taxon>
        <taxon>Burkholderiaceae</taxon>
        <taxon>Burkholderia</taxon>
        <taxon>pseudomallei group</taxon>
    </lineage>
</organism>
<keyword id="KW-0963">Cytoplasm</keyword>
<keyword id="KW-0704">Schiff base</keyword>
<keyword id="KW-0784">Thiamine biosynthesis</keyword>
<keyword id="KW-0808">Transferase</keyword>